<name>RBFA_STAAC</name>
<proteinExistence type="inferred from homology"/>
<comment type="function">
    <text evidence="1">One of several proteins that assist in the late maturation steps of the functional core of the 30S ribosomal subunit. Associates with free 30S ribosomal subunits (but not with 30S subunits that are part of 70S ribosomes or polysomes). Required for efficient processing of 16S rRNA. May interact with the 5'-terminal helix region of 16S rRNA.</text>
</comment>
<comment type="subunit">
    <text evidence="1">Monomer. Binds 30S ribosomal subunits, but not 50S ribosomal subunits or 70S ribosomes.</text>
</comment>
<comment type="subcellular location">
    <subcellularLocation>
        <location evidence="1">Cytoplasm</location>
    </subcellularLocation>
</comment>
<comment type="similarity">
    <text evidence="1">Belongs to the RbfA family.</text>
</comment>
<gene>
    <name evidence="1" type="primary">rbfA</name>
    <name type="ordered locus">SACOL1289</name>
</gene>
<reference key="1">
    <citation type="journal article" date="2005" name="J. Bacteriol.">
        <title>Insights on evolution of virulence and resistance from the complete genome analysis of an early methicillin-resistant Staphylococcus aureus strain and a biofilm-producing methicillin-resistant Staphylococcus epidermidis strain.</title>
        <authorList>
            <person name="Gill S.R."/>
            <person name="Fouts D.E."/>
            <person name="Archer G.L."/>
            <person name="Mongodin E.F."/>
            <person name="DeBoy R.T."/>
            <person name="Ravel J."/>
            <person name="Paulsen I.T."/>
            <person name="Kolonay J.F."/>
            <person name="Brinkac L.M."/>
            <person name="Beanan M.J."/>
            <person name="Dodson R.J."/>
            <person name="Daugherty S.C."/>
            <person name="Madupu R."/>
            <person name="Angiuoli S.V."/>
            <person name="Durkin A.S."/>
            <person name="Haft D.H."/>
            <person name="Vamathevan J.J."/>
            <person name="Khouri H."/>
            <person name="Utterback T.R."/>
            <person name="Lee C."/>
            <person name="Dimitrov G."/>
            <person name="Jiang L."/>
            <person name="Qin H."/>
            <person name="Weidman J."/>
            <person name="Tran K."/>
            <person name="Kang K.H."/>
            <person name="Hance I.R."/>
            <person name="Nelson K.E."/>
            <person name="Fraser C.M."/>
        </authorList>
    </citation>
    <scope>NUCLEOTIDE SEQUENCE [LARGE SCALE GENOMIC DNA]</scope>
    <source>
        <strain>COL</strain>
    </source>
</reference>
<accession>Q5HGG1</accession>
<keyword id="KW-0963">Cytoplasm</keyword>
<keyword id="KW-0690">Ribosome biogenesis</keyword>
<organism>
    <name type="scientific">Staphylococcus aureus (strain COL)</name>
    <dbReference type="NCBI Taxonomy" id="93062"/>
    <lineage>
        <taxon>Bacteria</taxon>
        <taxon>Bacillati</taxon>
        <taxon>Bacillota</taxon>
        <taxon>Bacilli</taxon>
        <taxon>Bacillales</taxon>
        <taxon>Staphylococcaceae</taxon>
        <taxon>Staphylococcus</taxon>
    </lineage>
</organism>
<feature type="chain" id="PRO_0000102730" description="Ribosome-binding factor A">
    <location>
        <begin position="1"/>
        <end position="116"/>
    </location>
</feature>
<dbReference type="EMBL" id="CP000046">
    <property type="protein sequence ID" value="AAW38120.1"/>
    <property type="molecule type" value="Genomic_DNA"/>
</dbReference>
<dbReference type="RefSeq" id="WP_000097322.1">
    <property type="nucleotide sequence ID" value="NZ_JBGOFO010000002.1"/>
</dbReference>
<dbReference type="SMR" id="Q5HGG1"/>
<dbReference type="KEGG" id="sac:SACOL1289"/>
<dbReference type="HOGENOM" id="CLU_089475_6_3_9"/>
<dbReference type="Proteomes" id="UP000000530">
    <property type="component" value="Chromosome"/>
</dbReference>
<dbReference type="GO" id="GO:0005829">
    <property type="term" value="C:cytosol"/>
    <property type="evidence" value="ECO:0007669"/>
    <property type="project" value="TreeGrafter"/>
</dbReference>
<dbReference type="GO" id="GO:0043024">
    <property type="term" value="F:ribosomal small subunit binding"/>
    <property type="evidence" value="ECO:0007669"/>
    <property type="project" value="TreeGrafter"/>
</dbReference>
<dbReference type="GO" id="GO:0030490">
    <property type="term" value="P:maturation of SSU-rRNA"/>
    <property type="evidence" value="ECO:0007669"/>
    <property type="project" value="UniProtKB-UniRule"/>
</dbReference>
<dbReference type="FunFam" id="3.30.300.20:FF:000009">
    <property type="entry name" value="Ribosome-binding factor A"/>
    <property type="match status" value="1"/>
</dbReference>
<dbReference type="Gene3D" id="3.30.300.20">
    <property type="match status" value="1"/>
</dbReference>
<dbReference type="HAMAP" id="MF_00003">
    <property type="entry name" value="RbfA"/>
    <property type="match status" value="1"/>
</dbReference>
<dbReference type="InterPro" id="IPR015946">
    <property type="entry name" value="KH_dom-like_a/b"/>
</dbReference>
<dbReference type="InterPro" id="IPR000238">
    <property type="entry name" value="RbfA"/>
</dbReference>
<dbReference type="InterPro" id="IPR023799">
    <property type="entry name" value="RbfA_dom_sf"/>
</dbReference>
<dbReference type="InterPro" id="IPR020053">
    <property type="entry name" value="Ribosome-bd_factorA_CS"/>
</dbReference>
<dbReference type="NCBIfam" id="TIGR00082">
    <property type="entry name" value="rbfA"/>
    <property type="match status" value="1"/>
</dbReference>
<dbReference type="PANTHER" id="PTHR33515">
    <property type="entry name" value="RIBOSOME-BINDING FACTOR A, CHLOROPLASTIC-RELATED"/>
    <property type="match status" value="1"/>
</dbReference>
<dbReference type="PANTHER" id="PTHR33515:SF1">
    <property type="entry name" value="RIBOSOME-BINDING FACTOR A, CHLOROPLASTIC-RELATED"/>
    <property type="match status" value="1"/>
</dbReference>
<dbReference type="Pfam" id="PF02033">
    <property type="entry name" value="RBFA"/>
    <property type="match status" value="1"/>
</dbReference>
<dbReference type="SUPFAM" id="SSF89919">
    <property type="entry name" value="Ribosome-binding factor A, RbfA"/>
    <property type="match status" value="1"/>
</dbReference>
<dbReference type="PROSITE" id="PS01319">
    <property type="entry name" value="RBFA"/>
    <property type="match status" value="1"/>
</dbReference>
<protein>
    <recommendedName>
        <fullName evidence="1">Ribosome-binding factor A</fullName>
    </recommendedName>
</protein>
<evidence type="ECO:0000255" key="1">
    <source>
        <dbReference type="HAMAP-Rule" id="MF_00003"/>
    </source>
</evidence>
<sequence length="116" mass="13515">MSSMRAERVGEQMKKELMDIINNKVKDPRVGFITITDVVLTNDLSQAKVFLTVLGNDKEVENTFKALDKAKGFIKSELGSRMRLRIMPELMYEYDQSIEYGNKIERMIQDLHKQDR</sequence>